<accession>Q9JF93</accession>
<evidence type="ECO:0000250" key="1"/>
<evidence type="ECO:0000250" key="2">
    <source>
        <dbReference type="UniProtKB" id="P20636"/>
    </source>
</evidence>
<evidence type="ECO:0000305" key="3"/>
<gene>
    <name type="primary">OPG133</name>
    <name type="synonym">VETFL</name>
    <name type="ORF">TA8L</name>
</gene>
<proteinExistence type="inferred from homology"/>
<organismHost>
    <name type="scientific">Homo sapiens</name>
    <name type="common">Human</name>
    <dbReference type="NCBI Taxonomy" id="9606"/>
</organismHost>
<protein>
    <recommendedName>
        <fullName>Early transcription factor 82 kDa subunit</fullName>
    </recommendedName>
    <alternativeName>
        <fullName>ETF large subunit</fullName>
    </alternativeName>
    <alternativeName>
        <fullName>VETF A7 subunit</fullName>
    </alternativeName>
    <alternativeName>
        <fullName>Vaccinia virus early transcription factor large subunit</fullName>
        <shortName>VETF large subunit</shortName>
    </alternativeName>
</protein>
<organism>
    <name type="scientific">Vaccinia virus (strain Tian Tan)</name>
    <name type="common">VACV</name>
    <dbReference type="NCBI Taxonomy" id="10253"/>
    <lineage>
        <taxon>Viruses</taxon>
        <taxon>Varidnaviria</taxon>
        <taxon>Bamfordvirae</taxon>
        <taxon>Nucleocytoviricota</taxon>
        <taxon>Pokkesviricetes</taxon>
        <taxon>Chitovirales</taxon>
        <taxon>Poxviridae</taxon>
        <taxon>Chordopoxvirinae</taxon>
        <taxon>Orthopoxvirus</taxon>
        <taxon>Vaccinia virus</taxon>
    </lineage>
</organism>
<keyword id="KW-0010">Activator</keyword>
<keyword id="KW-0238">DNA-binding</keyword>
<keyword id="KW-0426">Late protein</keyword>
<keyword id="KW-0804">Transcription</keyword>
<keyword id="KW-0805">Transcription regulation</keyword>
<keyword id="KW-0946">Virion</keyword>
<dbReference type="EMBL" id="AF095689">
    <property type="protein sequence ID" value="AAF33997.1"/>
    <property type="molecule type" value="Genomic_DNA"/>
</dbReference>
<dbReference type="SMR" id="Q9JF93"/>
<dbReference type="Proteomes" id="UP000163220">
    <property type="component" value="Genome"/>
</dbReference>
<dbReference type="GO" id="GO:0044423">
    <property type="term" value="C:virion component"/>
    <property type="evidence" value="ECO:0007669"/>
    <property type="project" value="UniProtKB-KW"/>
</dbReference>
<dbReference type="GO" id="GO:0003677">
    <property type="term" value="F:DNA binding"/>
    <property type="evidence" value="ECO:0007669"/>
    <property type="project" value="UniProtKB-KW"/>
</dbReference>
<dbReference type="GO" id="GO:0045893">
    <property type="term" value="P:positive regulation of DNA-templated transcription"/>
    <property type="evidence" value="ECO:0007669"/>
    <property type="project" value="InterPro"/>
</dbReference>
<dbReference type="InterPro" id="IPR007532">
    <property type="entry name" value="Poxvirus_early-TF_lsu"/>
</dbReference>
<dbReference type="Pfam" id="PF04441">
    <property type="entry name" value="Pox_VERT_large"/>
    <property type="match status" value="1"/>
</dbReference>
<sequence length="710" mass="82291">MRYIVSPQLVLQVGKGQEVERALYLTPYDYIDEKSPIYYFLRSHLNIQQPEIVKRHILLTLRMTQLKGYLGNLLDIKDDIIIYSHKNNLEYSYVDNTIFNPFVYTQKKTLLKNDSFLYNVYSGACDFLVIWVARACDTSIPEFGSYEDVDNNIIKFETMLMEVFPQLDLDITVESKFNNIFRTNLKLTGLKKIIQRVQDLDINYKSLLSRYDEHFINMTGNHFILNDEQLNLSIWDLDGTLALSSDGDTVMINNVKLFTDLVSDIDTQMERIKGDITYKVHLATPINSRIKLDIETSFIFIETATNNILLSSDKKISIILAKNHISIKVKNHIPNIEKYFTFLVIAINAMFNSVQKSADFTKVETVYWSRICQNTKNKNRKPIIINYLDPGMKKISNNFYRSDEKEVFINDNGIMFTCMDPLGKYNKVGFLNIFHDMRKYCIPCCFLHDQSHRSTFSSCVHQIDVEKKIVSPYILNFGKVVTESKMSFLPIIFDAFLNDGMTANMEQDNKRLKETSGYHIVRCCAGDDIVRLRTTSDIIQFVNEDKNILIVNDMVYFPMNASDIGKKIHILIQEIVHEVMIVKKKESSDKIDFFPPNYKLLKDLFPKQTIQTPIQSDAGMVLTTDGFYIDGKLFNEDLSSKYVTFTKNVIASDAVAKYFSPLFKYVISEAKDRFIKTWMINIMIHMNVDPNNIIPTLEKYYPNSGRAQIN</sequence>
<feature type="chain" id="PRO_0000099081" description="Early transcription factor 82 kDa subunit">
    <location>
        <begin position="1"/>
        <end position="710"/>
    </location>
</feature>
<comment type="function">
    <text evidence="2">Acts with RNA polymerase to initiate transcription from early gene promoters. Is recruited by the RPO-associated protein of 94 kDa RAP94/OPG109 to form the early transcription complex, which also contains the core RNA polymerase. ETF heterodimer binds to early gene promoters.</text>
</comment>
<comment type="subunit">
    <text evidence="2">Heterodimer of a 70 kDa and a 82 kDa subunit. Part of the early transcription complex composed of ETF, RAP94/OPG109, and the DNA-directed RNA polymerase.</text>
</comment>
<comment type="subcellular location">
    <subcellularLocation>
        <location evidence="2">Virion</location>
    </subcellularLocation>
    <text evidence="1">All the enzymes and other proteins required to synthesize early mRNAs are packaged within the virion core along with the DNA genome. This is necessary because viral early mRNAs are synthesized within minutes after virus entry into the cell and are extruded through pores in the core particle (By similarity).</text>
</comment>
<comment type="similarity">
    <text evidence="3">Belongs to the poxviridae VETF large subunit family.</text>
</comment>
<name>ETF2_VACCT</name>
<reference key="1">
    <citation type="submission" date="1998-09" db="EMBL/GenBank/DDBJ databases">
        <title>Complete genomic sequence of vaccinia virus (Tian Tan strain).</title>
        <authorList>
            <person name="Jin Q."/>
            <person name="Hou Y.D."/>
            <person name="Cheng N.H."/>
            <person name="Yao E.M."/>
            <person name="Cheng S.X."/>
            <person name="Yang X.K."/>
            <person name="Jing D.Y."/>
            <person name="Yu W.H."/>
            <person name="Yuan J.S."/>
            <person name="Ma X.J."/>
        </authorList>
    </citation>
    <scope>NUCLEOTIDE SEQUENCE [LARGE SCALE GENOMIC DNA]</scope>
</reference>